<evidence type="ECO:0000250" key="1"/>
<evidence type="ECO:0000250" key="2">
    <source>
        <dbReference type="UniProtKB" id="Q64455"/>
    </source>
</evidence>
<evidence type="ECO:0000255" key="3"/>
<evidence type="ECO:0000255" key="4">
    <source>
        <dbReference type="PROSITE-ProRule" id="PRU00160"/>
    </source>
</evidence>
<evidence type="ECO:0000255" key="5">
    <source>
        <dbReference type="PROSITE-ProRule" id="PRU00316"/>
    </source>
</evidence>
<evidence type="ECO:0000255" key="6">
    <source>
        <dbReference type="PROSITE-ProRule" id="PRU10044"/>
    </source>
</evidence>
<evidence type="ECO:0000256" key="7">
    <source>
        <dbReference type="SAM" id="MobiDB-lite"/>
    </source>
</evidence>
<evidence type="ECO:0000269" key="8">
    <source>
    </source>
</evidence>
<evidence type="ECO:0000269" key="9">
    <source>
    </source>
</evidence>
<evidence type="ECO:0000269" key="10">
    <source>
    </source>
</evidence>
<evidence type="ECO:0000269" key="11">
    <source>
    </source>
</evidence>
<evidence type="ECO:0000269" key="12">
    <source>
    </source>
</evidence>
<evidence type="ECO:0000269" key="13">
    <source>
    </source>
</evidence>
<evidence type="ECO:0000269" key="14">
    <source>
    </source>
</evidence>
<evidence type="ECO:0000269" key="15">
    <source>
    </source>
</evidence>
<evidence type="ECO:0000269" key="16">
    <source>
    </source>
</evidence>
<evidence type="ECO:0000269" key="17">
    <source>
    </source>
</evidence>
<evidence type="ECO:0000269" key="18">
    <source>
    </source>
</evidence>
<evidence type="ECO:0000269" key="19">
    <source>
    </source>
</evidence>
<evidence type="ECO:0000269" key="20">
    <source>
    </source>
</evidence>
<evidence type="ECO:0000269" key="21">
    <source>
    </source>
</evidence>
<evidence type="ECO:0000269" key="22">
    <source>
    </source>
</evidence>
<evidence type="ECO:0000269" key="23">
    <source>
    </source>
</evidence>
<evidence type="ECO:0000269" key="24">
    <source>
    </source>
</evidence>
<evidence type="ECO:0000269" key="25">
    <source>
    </source>
</evidence>
<evidence type="ECO:0000269" key="26">
    <source>
    </source>
</evidence>
<evidence type="ECO:0000269" key="27">
    <source>
    </source>
</evidence>
<evidence type="ECO:0000269" key="28">
    <source>
    </source>
</evidence>
<evidence type="ECO:0000269" key="29">
    <source>
    </source>
</evidence>
<evidence type="ECO:0000269" key="30">
    <source>
    </source>
</evidence>
<evidence type="ECO:0000269" key="31">
    <source>
    </source>
</evidence>
<evidence type="ECO:0000269" key="32">
    <source>
    </source>
</evidence>
<evidence type="ECO:0000269" key="33">
    <source>
    </source>
</evidence>
<evidence type="ECO:0000269" key="34">
    <source>
    </source>
</evidence>
<evidence type="ECO:0000269" key="35">
    <source>
    </source>
</evidence>
<evidence type="ECO:0000269" key="36">
    <source>
    </source>
</evidence>
<evidence type="ECO:0000303" key="37">
    <source>
    </source>
</evidence>
<evidence type="ECO:0000303" key="38">
    <source>
    </source>
</evidence>
<evidence type="ECO:0000303" key="39">
    <source>
    </source>
</evidence>
<evidence type="ECO:0000303" key="40">
    <source>
    </source>
</evidence>
<evidence type="ECO:0000303" key="41">
    <source>
    </source>
</evidence>
<evidence type="ECO:0000305" key="42"/>
<evidence type="ECO:0000305" key="43">
    <source>
    </source>
</evidence>
<evidence type="ECO:0000305" key="44">
    <source>
    </source>
</evidence>
<evidence type="ECO:0000305" key="45">
    <source>
    </source>
</evidence>
<evidence type="ECO:0007744" key="46">
    <source>
    </source>
</evidence>
<evidence type="ECO:0007829" key="47">
    <source>
        <dbReference type="PDB" id="2DLE"/>
    </source>
</evidence>
<evidence type="ECO:0007829" key="48">
    <source>
        <dbReference type="PDB" id="2NZ6"/>
    </source>
</evidence>
<evidence type="ECO:0007829" key="49">
    <source>
        <dbReference type="PDB" id="7U01"/>
    </source>
</evidence>
<evidence type="ECO:0007829" key="50">
    <source>
        <dbReference type="PDB" id="7U08"/>
    </source>
</evidence>
<feature type="signal peptide" evidence="3">
    <location>
        <begin position="1"/>
        <end position="35"/>
    </location>
</feature>
<feature type="chain" id="PRO_0000025444" description="Receptor-type tyrosine-protein phosphatase eta">
    <location>
        <begin position="36"/>
        <end position="1337"/>
    </location>
</feature>
<feature type="topological domain" description="Extracellular" evidence="3">
    <location>
        <begin position="36"/>
        <end position="975"/>
    </location>
</feature>
<feature type="transmembrane region" description="Helical" evidence="3">
    <location>
        <begin position="976"/>
        <end position="996"/>
    </location>
</feature>
<feature type="topological domain" description="Cytoplasmic" evidence="3">
    <location>
        <begin position="997"/>
        <end position="1337"/>
    </location>
</feature>
<feature type="domain" description="Fibronectin type-III 1" evidence="5">
    <location>
        <begin position="121"/>
        <end position="209"/>
    </location>
</feature>
<feature type="domain" description="Fibronectin type-III 2" evidence="5">
    <location>
        <begin position="207"/>
        <end position="291"/>
    </location>
</feature>
<feature type="domain" description="Fibronectin type-III 3" evidence="5">
    <location>
        <begin position="271"/>
        <end position="364"/>
    </location>
</feature>
<feature type="domain" description="Fibronectin type-III 4" evidence="5">
    <location>
        <begin position="368"/>
        <end position="456"/>
    </location>
</feature>
<feature type="domain" description="Fibronectin type-III 5" evidence="5">
    <location>
        <begin position="457"/>
        <end position="541"/>
    </location>
</feature>
<feature type="domain" description="Fibronectin type-III 6" evidence="5">
    <location>
        <begin position="542"/>
        <end position="623"/>
    </location>
</feature>
<feature type="domain" description="Fibronectin type-III 7" evidence="5">
    <location>
        <begin position="625"/>
        <end position="720"/>
    </location>
</feature>
<feature type="domain" description="Fibronectin type-III 8" evidence="5">
    <location>
        <begin position="721"/>
        <end position="817"/>
    </location>
</feature>
<feature type="domain" description="Fibronectin type-III 9" evidence="5">
    <location>
        <begin position="816"/>
        <end position="902"/>
    </location>
</feature>
<feature type="domain" description="Tyrosine-protein phosphatase" evidence="4">
    <location>
        <begin position="1041"/>
        <end position="1298"/>
    </location>
</feature>
<feature type="region of interest" description="Disordered" evidence="7">
    <location>
        <begin position="67"/>
        <end position="124"/>
    </location>
</feature>
<feature type="region of interest" description="Disordered" evidence="7">
    <location>
        <begin position="278"/>
        <end position="327"/>
    </location>
</feature>
<feature type="compositionally biased region" description="Polar residues" evidence="7">
    <location>
        <begin position="67"/>
        <end position="82"/>
    </location>
</feature>
<feature type="compositionally biased region" description="Polar residues" evidence="7">
    <location>
        <begin position="89"/>
        <end position="119"/>
    </location>
</feature>
<feature type="active site" description="Phosphocysteine intermediate" evidence="4 6">
    <location>
        <position position="1239"/>
    </location>
</feature>
<feature type="binding site" evidence="1">
    <location>
        <position position="1205"/>
    </location>
    <ligand>
        <name>substrate</name>
    </ligand>
</feature>
<feature type="binding site" evidence="1">
    <location>
        <begin position="1239"/>
        <end position="1245"/>
    </location>
    <ligand>
        <name>substrate</name>
    </ligand>
</feature>
<feature type="binding site" evidence="1">
    <location>
        <position position="1283"/>
    </location>
    <ligand>
        <name>substrate</name>
    </ligand>
</feature>
<feature type="modified residue" description="Phosphoserine" evidence="46">
    <location>
        <position position="1009"/>
    </location>
</feature>
<feature type="glycosylation site" description="N-linked (GlcNAc...) asparagine" evidence="3">
    <location>
        <position position="72"/>
    </location>
</feature>
<feature type="glycosylation site" description="N-linked (GlcNAc...) asparagine" evidence="3">
    <location>
        <position position="82"/>
    </location>
</feature>
<feature type="glycosylation site" description="N-linked (GlcNAc...) asparagine" evidence="3">
    <location>
        <position position="93"/>
    </location>
</feature>
<feature type="glycosylation site" description="N-linked (GlcNAc...) asparagine" evidence="3">
    <location>
        <position position="104"/>
    </location>
</feature>
<feature type="glycosylation site" description="N-linked (GlcNAc...) asparagine" evidence="3">
    <location>
        <position position="142"/>
    </location>
</feature>
<feature type="glycosylation site" description="N-linked (GlcNAc...) asparagine" evidence="3">
    <location>
        <position position="172"/>
    </location>
</feature>
<feature type="glycosylation site" description="N-linked (GlcNAc...) asparagine" evidence="3">
    <location>
        <position position="192"/>
    </location>
</feature>
<feature type="glycosylation site" description="N-linked (GlcNAc...) asparagine" evidence="3">
    <location>
        <position position="231"/>
    </location>
</feature>
<feature type="glycosylation site" description="N-linked (GlcNAc...) asparagine" evidence="3">
    <location>
        <position position="258"/>
    </location>
</feature>
<feature type="glycosylation site" description="N-linked (GlcNAc...) asparagine" evidence="3">
    <location>
        <position position="278"/>
    </location>
</feature>
<feature type="glycosylation site" description="N-linked (GlcNAc...) asparagine" evidence="17">
    <location>
        <position position="342"/>
    </location>
</feature>
<feature type="glycosylation site" description="N-linked (GlcNAc...) asparagine" evidence="17">
    <location>
        <position position="351"/>
    </location>
</feature>
<feature type="glycosylation site" description="N-linked (GlcNAc...) asparagine" evidence="3">
    <location>
        <position position="376"/>
    </location>
</feature>
<feature type="glycosylation site" description="N-linked (GlcNAc...) asparagine" evidence="17">
    <location>
        <position position="391"/>
    </location>
</feature>
<feature type="glycosylation site" description="N-linked (GlcNAc...) asparagine" evidence="17">
    <location>
        <position position="396"/>
    </location>
</feature>
<feature type="glycosylation site" description="N-linked (GlcNAc...) asparagine" evidence="22">
    <location>
        <position position="413"/>
    </location>
</feature>
<feature type="glycosylation site" description="N-linked (GlcNAc...) asparagine" evidence="3">
    <location>
        <position position="431"/>
    </location>
</feature>
<feature type="glycosylation site" description="N-linked (GlcNAc...) asparagine" evidence="3">
    <location>
        <position position="501"/>
    </location>
</feature>
<feature type="glycosylation site" description="N-linked (GlcNAc...) asparagine" evidence="3">
    <location>
        <position position="525"/>
    </location>
</feature>
<feature type="glycosylation site" description="N-linked (GlcNAc...) asparagine" evidence="3">
    <location>
        <position position="536"/>
    </location>
</feature>
<feature type="glycosylation site" description="N-linked (GlcNAc...) asparagine" evidence="3">
    <location>
        <position position="582"/>
    </location>
</feature>
<feature type="glycosylation site" description="N-linked (GlcNAc...) asparagine" evidence="3">
    <location>
        <position position="603"/>
    </location>
</feature>
<feature type="glycosylation site" description="N-linked (GlcNAc...) asparagine" evidence="3">
    <location>
        <position position="618"/>
    </location>
</feature>
<feature type="glycosylation site" description="N-linked (GlcNAc...) asparagine" evidence="3">
    <location>
        <position position="628"/>
    </location>
</feature>
<feature type="glycosylation site" description="N-linked (GlcNAc...) asparagine" evidence="3">
    <location>
        <position position="637"/>
    </location>
</feature>
<feature type="glycosylation site" description="N-linked (GlcNAc...) asparagine" evidence="3">
    <location>
        <position position="666"/>
    </location>
</feature>
<feature type="glycosylation site" description="N-linked (GlcNAc...) asparagine" evidence="3">
    <location>
        <position position="669"/>
    </location>
</feature>
<feature type="glycosylation site" description="N-linked (GlcNAc...) asparagine" evidence="3">
    <location>
        <position position="761"/>
    </location>
</feature>
<feature type="glycosylation site" description="N-linked (GlcNAc...) asparagine" evidence="3">
    <location>
        <position position="772"/>
    </location>
</feature>
<feature type="glycosylation site" description="N-linked (GlcNAc...) asparagine" evidence="3">
    <location>
        <position position="784"/>
    </location>
</feature>
<feature type="glycosylation site" description="N-linked (GlcNAc...) asparagine" evidence="3">
    <location>
        <position position="790"/>
    </location>
</feature>
<feature type="glycosylation site" description="N-linked (GlcNAc...) asparagine" evidence="3">
    <location>
        <position position="824"/>
    </location>
</feature>
<feature type="glycosylation site" description="N-linked (GlcNAc...) asparagine" evidence="3">
    <location>
        <position position="910"/>
    </location>
</feature>
<feature type="glycosylation site" description="N-linked (GlcNAc...) asparagine" evidence="22">
    <location>
        <position position="937"/>
    </location>
</feature>
<feature type="splice variant" id="VSP_060928" description="In isoform 3.">
    <original>M</original>
    <variation>MSPGKPGAGGAGTRRTGWRRRRRRRRQEAATTVPGLGRTAGPDSRVRGTFQGARGM</variation>
    <location>
        <position position="1"/>
    </location>
</feature>
<feature type="splice variant" id="VSP_043652" description="In isoform 2." evidence="39">
    <original>V</original>
    <variation>G</variation>
    <location>
        <position position="539"/>
    </location>
</feature>
<feature type="splice variant" id="VSP_043653" description="In isoform 2." evidence="39">
    <location>
        <begin position="540"/>
        <end position="1337"/>
    </location>
</feature>
<feature type="sequence variant" id="VAR_015905" description="In a colon cancer sample; somatic mutation; dbSNP:rs121434507." evidence="11">
    <original>R</original>
    <variation>C</variation>
    <location>
        <position position="214"/>
    </location>
</feature>
<feature type="sequence variant" id="VAR_015906" description="In a colon cancer sample; somatic mutation; dbSNP:rs1566734." evidence="11 16">
    <original>Q</original>
    <variation>P</variation>
    <location>
        <position position="276"/>
    </location>
</feature>
<feature type="sequence variant" id="VAR_038414" description="In dbSNP:rs2229701.">
    <original>A</original>
    <variation>T</variation>
    <location>
        <position position="293"/>
    </location>
</feature>
<feature type="sequence variant" id="VAR_024582" description="In dbSNP:rs1503185." evidence="16">
    <original>R</original>
    <variation>Q</variation>
    <location>
        <position position="326"/>
    </location>
</feature>
<feature type="sequence variant" id="VAR_038415" description="In dbSNP:rs2229703.">
    <original>V</original>
    <variation>I</variation>
    <location>
        <position position="372"/>
    </location>
</feature>
<feature type="sequence variant" id="VAR_038416" description="In dbSNP:rs4752904." evidence="11 16 32 33">
    <original>E</original>
    <variation>D</variation>
    <location>
        <position position="872"/>
    </location>
</feature>
<feature type="sequence variant" id="VAR_038417" description="In dbSNP:rs11039554.">
    <original>I</original>
    <variation>T</variation>
    <location>
        <position position="1235"/>
    </location>
</feature>
<feature type="mutagenesis site" description="80% decrease in interaction with MAPK1 and MAPK3." evidence="25">
    <original>K</original>
    <variation>A</variation>
    <location>
        <position position="1016"/>
    </location>
</feature>
<feature type="mutagenesis site" description="Substrate trapping with much higher affinity for substrate." evidence="12 13 19 21 24 25 26 29">
    <original>D</original>
    <variation>A</variation>
    <location>
        <position position="1205"/>
    </location>
</feature>
<feature type="mutagenesis site" description="Catalytically inactive and substrate trapping with higher affinity for substrate." evidence="12 13 21 24 26 29">
    <original>C</original>
    <variation>S</variation>
    <location>
        <position position="1239"/>
    </location>
</feature>
<feature type="sequence conflict" description="In Ref. 1; AAB36687." evidence="42" ref="1">
    <original>G</original>
    <variation>D</variation>
    <location>
        <position position="261"/>
    </location>
</feature>
<feature type="sequence conflict" description="In Ref. 2; BAA07035." evidence="42" ref="2">
    <original>YNGKLEPLGSYR</original>
    <variation>LQWEAGTSGLLP</variation>
    <location>
        <begin position="918"/>
        <end position="929"/>
    </location>
</feature>
<feature type="sequence conflict" description="In Ref. 6; no nucleotide entry." evidence="42" ref="6">
    <original>K</original>
    <variation>Q</variation>
    <location>
        <position position="1130"/>
    </location>
</feature>
<feature type="sequence conflict" description="In Ref. 6; no nucleotide entry." evidence="42" ref="6">
    <original>P</original>
    <variation>E</variation>
    <location>
        <position position="1234"/>
    </location>
</feature>
<feature type="sequence conflict" description="In Ref. 6; no nucleotide entry." evidence="42" ref="6">
    <original>V</original>
    <variation>I</variation>
    <location>
        <position position="1243"/>
    </location>
</feature>
<feature type="strand" evidence="50">
    <location>
        <begin position="123"/>
        <end position="133"/>
    </location>
</feature>
<feature type="strand" evidence="50">
    <location>
        <begin position="135"/>
        <end position="140"/>
    </location>
</feature>
<feature type="strand" evidence="50">
    <location>
        <begin position="143"/>
        <end position="145"/>
    </location>
</feature>
<feature type="strand" evidence="50">
    <location>
        <begin position="150"/>
        <end position="155"/>
    </location>
</feature>
<feature type="strand" evidence="50">
    <location>
        <begin position="162"/>
        <end position="173"/>
    </location>
</feature>
<feature type="strand" evidence="50">
    <location>
        <begin position="181"/>
        <end position="193"/>
    </location>
</feature>
<feature type="strand" evidence="50">
    <location>
        <begin position="199"/>
        <end position="204"/>
    </location>
</feature>
<feature type="strand" evidence="49">
    <location>
        <begin position="211"/>
        <end position="216"/>
    </location>
</feature>
<feature type="strand" evidence="49">
    <location>
        <begin position="219"/>
        <end position="221"/>
    </location>
</feature>
<feature type="strand" evidence="49">
    <location>
        <begin position="223"/>
        <end position="228"/>
    </location>
</feature>
<feature type="strand" evidence="49">
    <location>
        <begin position="235"/>
        <end position="242"/>
    </location>
</feature>
<feature type="strand" evidence="49">
    <location>
        <begin position="256"/>
        <end position="262"/>
    </location>
</feature>
<feature type="strand" evidence="49">
    <location>
        <begin position="267"/>
        <end position="270"/>
    </location>
</feature>
<feature type="helix" evidence="49">
    <location>
        <begin position="272"/>
        <end position="276"/>
    </location>
</feature>
<feature type="strand" evidence="49">
    <location>
        <begin position="327"/>
        <end position="332"/>
    </location>
</feature>
<feature type="strand" evidence="49">
    <location>
        <begin position="340"/>
        <end position="348"/>
    </location>
</feature>
<feature type="strand" evidence="49">
    <location>
        <begin position="358"/>
        <end position="363"/>
    </location>
</feature>
<feature type="strand" evidence="47">
    <location>
        <begin position="368"/>
        <end position="377"/>
    </location>
</feature>
<feature type="strand" evidence="47">
    <location>
        <begin position="382"/>
        <end position="389"/>
    </location>
</feature>
<feature type="strand" evidence="47">
    <location>
        <begin position="398"/>
        <end position="404"/>
    </location>
</feature>
<feature type="strand" evidence="47">
    <location>
        <begin position="409"/>
        <end position="420"/>
    </location>
</feature>
<feature type="strand" evidence="47">
    <location>
        <begin position="429"/>
        <end position="440"/>
    </location>
</feature>
<feature type="strand" evidence="47">
    <location>
        <begin position="446"/>
        <end position="451"/>
    </location>
</feature>
<feature type="helix" evidence="48">
    <location>
        <begin position="1023"/>
        <end position="1047"/>
    </location>
</feature>
<feature type="turn" evidence="48">
    <location>
        <begin position="1048"/>
        <end position="1054"/>
    </location>
</feature>
<feature type="turn" evidence="48">
    <location>
        <begin position="1058"/>
        <end position="1061"/>
    </location>
</feature>
<feature type="helix" evidence="48">
    <location>
        <begin position="1063"/>
        <end position="1068"/>
    </location>
</feature>
<feature type="turn" evidence="48">
    <location>
        <begin position="1078"/>
        <end position="1080"/>
    </location>
</feature>
<feature type="strand" evidence="48">
    <location>
        <begin position="1087"/>
        <end position="1089"/>
    </location>
</feature>
<feature type="helix" evidence="48">
    <location>
        <begin position="1090"/>
        <end position="1093"/>
    </location>
</feature>
<feature type="strand" evidence="48">
    <location>
        <begin position="1096"/>
        <end position="1100"/>
    </location>
</feature>
<feature type="strand" evidence="48">
    <location>
        <begin position="1108"/>
        <end position="1113"/>
    </location>
</feature>
<feature type="turn" evidence="48">
    <location>
        <begin position="1117"/>
        <end position="1119"/>
    </location>
</feature>
<feature type="helix" evidence="48">
    <location>
        <begin position="1120"/>
        <end position="1129"/>
    </location>
</feature>
<feature type="strand" evidence="48">
    <location>
        <begin position="1134"/>
        <end position="1138"/>
    </location>
</feature>
<feature type="strand" evidence="48">
    <location>
        <begin position="1155"/>
        <end position="1157"/>
    </location>
</feature>
<feature type="strand" evidence="48">
    <location>
        <begin position="1159"/>
        <end position="1161"/>
    </location>
</feature>
<feature type="strand" evidence="48">
    <location>
        <begin position="1164"/>
        <end position="1173"/>
    </location>
</feature>
<feature type="strand" evidence="48">
    <location>
        <begin position="1175"/>
        <end position="1186"/>
    </location>
</feature>
<feature type="turn" evidence="48">
    <location>
        <begin position="1187"/>
        <end position="1189"/>
    </location>
</feature>
<feature type="strand" evidence="48">
    <location>
        <begin position="1192"/>
        <end position="1200"/>
    </location>
</feature>
<feature type="helix" evidence="48">
    <location>
        <begin position="1212"/>
        <end position="1225"/>
    </location>
</feature>
<feature type="strand" evidence="48">
    <location>
        <begin position="1235"/>
        <end position="1243"/>
    </location>
</feature>
<feature type="helix" evidence="48">
    <location>
        <begin position="1244"/>
        <end position="1261"/>
    </location>
</feature>
<feature type="strand" evidence="48">
    <location>
        <begin position="1262"/>
        <end position="1265"/>
    </location>
</feature>
<feature type="helix" evidence="48">
    <location>
        <begin position="1267"/>
        <end position="1275"/>
    </location>
</feature>
<feature type="helix" evidence="48">
    <location>
        <begin position="1285"/>
        <end position="1302"/>
    </location>
</feature>
<reference key="1">
    <citation type="journal article" date="1994" name="Proc. Natl. Acad. Sci. U.S.A.">
        <title>Expression of DEP-1, a receptor-like protein-tyrosine-phosphatase, is enhanced with increasing cell density.</title>
        <authorList>
            <person name="Oestman A."/>
            <person name="Yang Q."/>
            <person name="Tonks N.K."/>
        </authorList>
    </citation>
    <scope>NUCLEOTIDE SEQUENCE [MRNA] (ISOFORM 1)</scope>
    <scope>VARIANT ASP-872</scope>
</reference>
<reference key="2">
    <citation type="journal article" date="1994" name="Blood">
        <title>Molecular cloning, characterization, and chromosomal localization of a novel protein-tyrosine phosphatase, HPTP eta.</title>
        <authorList>
            <person name="Honda H."/>
            <person name="Inazawa J."/>
            <person name="Nishida J."/>
            <person name="Yazaki Y."/>
            <person name="Hirai H."/>
        </authorList>
    </citation>
    <scope>NUCLEOTIDE SEQUENCE [MRNA] (ISOFORM 1)</scope>
    <scope>VARIANT ASP-872</scope>
</reference>
<reference key="3">
    <citation type="journal article" date="2006" name="Nature">
        <title>Human chromosome 11 DNA sequence and analysis including novel gene identification.</title>
        <authorList>
            <person name="Taylor T.D."/>
            <person name="Noguchi H."/>
            <person name="Totoki Y."/>
            <person name="Toyoda A."/>
            <person name="Kuroki Y."/>
            <person name="Dewar K."/>
            <person name="Lloyd C."/>
            <person name="Itoh T."/>
            <person name="Takeda T."/>
            <person name="Kim D.-W."/>
            <person name="She X."/>
            <person name="Barlow K.F."/>
            <person name="Bloom T."/>
            <person name="Bruford E."/>
            <person name="Chang J.L."/>
            <person name="Cuomo C.A."/>
            <person name="Eichler E."/>
            <person name="FitzGerald M.G."/>
            <person name="Jaffe D.B."/>
            <person name="LaButti K."/>
            <person name="Nicol R."/>
            <person name="Park H.-S."/>
            <person name="Seaman C."/>
            <person name="Sougnez C."/>
            <person name="Yang X."/>
            <person name="Zimmer A.R."/>
            <person name="Zody M.C."/>
            <person name="Birren B.W."/>
            <person name="Nusbaum C."/>
            <person name="Fujiyama A."/>
            <person name="Hattori M."/>
            <person name="Rogers J."/>
            <person name="Lander E.S."/>
            <person name="Sakaki Y."/>
        </authorList>
    </citation>
    <scope>NUCLEOTIDE SEQUENCE [LARGE SCALE GENOMIC DNA]</scope>
</reference>
<reference key="4">
    <citation type="journal article" date="2004" name="Genome Res.">
        <title>The status, quality, and expansion of the NIH full-length cDNA project: the Mammalian Gene Collection (MGC).</title>
        <authorList>
            <consortium name="The MGC Project Team"/>
        </authorList>
    </citation>
    <scope>NUCLEOTIDE SEQUENCE [LARGE SCALE MRNA] (ISOFORM 2)</scope>
    <source>
        <tissue>Pancreas</tissue>
    </source>
</reference>
<reference key="5">
    <citation type="journal article" date="2002" name="Nat. Genet.">
        <title>Ptprj is a candidate for the mouse colon-cancer susceptibility locus Scc1 and is frequently deleted in human cancers.</title>
        <authorList>
            <person name="Ruivenkamp C.A.L."/>
            <person name="van Wezel T."/>
            <person name="Zanon C."/>
            <person name="Stassen A.P.M."/>
            <person name="Vlcek C."/>
            <person name="Csikos T."/>
            <person name="Klous A.M."/>
            <person name="Tripodis N."/>
            <person name="Perrakis A."/>
            <person name="Boerrigter L."/>
            <person name="Groot P.C."/>
            <person name="Lindeman J."/>
            <person name="Mooi W.J."/>
            <person name="Meijjer G.A."/>
            <person name="Scholten G."/>
            <person name="Dauwerse H."/>
            <person name="Paces V."/>
            <person name="van Zandwijk N."/>
            <person name="van Ommen G.J.B."/>
            <person name="Demant P."/>
        </authorList>
    </citation>
    <scope>NUCLEOTIDE SEQUENCE [GENOMIC DNA] OF 33-1337</scope>
    <scope>VARIANTS CYS-214; PRO-276 AND ASP-872</scope>
    <source>
        <tissue>Colon</tissue>
    </source>
</reference>
<reference key="6">
    <citation type="journal article" date="1993" name="Leukemia">
        <title>Identification of novel protein-tyrosine phosphatases in a human leukemia cell line, F-36P.</title>
        <authorList>
            <person name="Honda H."/>
            <person name="Shibuya M."/>
            <person name="Chiba S."/>
            <person name="Yazaki Y."/>
            <person name="Hirai H."/>
        </authorList>
    </citation>
    <scope>NUCLEOTIDE SEQUENCE [MRNA] OF 1124-1245 (ISOFORM 1)</scope>
    <scope>TISSUE SPECIFICITY</scope>
    <source>
        <tissue>Leukemia</tissue>
    </source>
</reference>
<reference key="7">
    <citation type="journal article" date="1998" name="Blood">
        <title>CD148 is a membrane protein tyrosine phosphatase present in all hematopoietic lineages and is involved in signal transduction on lymphocytes.</title>
        <authorList>
            <person name="de la Fuente-Garcia M.A."/>
            <person name="Nicolas J.M."/>
            <person name="Freed J.H."/>
            <person name="Palou E."/>
            <person name="Thomas A.P."/>
            <person name="Vilella R."/>
            <person name="Vives J."/>
            <person name="Gaya A."/>
        </authorList>
    </citation>
    <scope>PROTEIN SEQUENCE OF 36-49; 485-502 AND 723-739</scope>
    <scope>FUNCTION</scope>
    <scope>TISSUE SPECIFICITY</scope>
    <scope>GLYCOSYLATION</scope>
    <scope>SUBCELLULAR LOCATION</scope>
</reference>
<reference key="8">
    <citation type="journal article" date="1998" name="J. Immunol.">
        <title>Negative regulation of human T cell activation by the receptor-type protein tyrosine phosphatase CD148.</title>
        <authorList>
            <person name="Tangye S.G."/>
            <person name="Wu J."/>
            <person name="Aversa G."/>
            <person name="de Vries J.E."/>
            <person name="Lanier L.L."/>
            <person name="Phillips J.H."/>
        </authorList>
    </citation>
    <scope>FUNCTION</scope>
</reference>
<reference key="9">
    <citation type="journal article" date="2000" name="J. Biol. Chem.">
        <title>Site-selective dephosphorylation of the platelet-derived growth factor beta-receptor by the receptor-like protein-tyrosine phosphatase DEP-1.</title>
        <authorList>
            <person name="Kovalenko M."/>
            <person name="Denner K."/>
            <person name="Sandstrom J."/>
            <person name="Persson C."/>
            <person name="Gross S."/>
            <person name="Jandt E."/>
            <person name="Vilella R."/>
            <person name="Bohmer F."/>
            <person name="Ostman A."/>
        </authorList>
    </citation>
    <scope>FUNCTION</scope>
</reference>
<reference key="10">
    <citation type="journal article" date="2001" name="Mol. Cell. Biol.">
        <title>Protein tyrosine phosphatase CD148-mediated inhibition of T-cell receptor signal transduction is associated with reduced LAT and phospholipase Cgamma1 phosphorylation.</title>
        <authorList>
            <person name="Baker J.E."/>
            <person name="Majeti R."/>
            <person name="Tangye S.G."/>
            <person name="Weiss A."/>
        </authorList>
    </citation>
    <scope>FUNCTION</scope>
</reference>
<reference key="11">
    <citation type="journal article" date="2002" name="FEBS Lett.">
        <title>Primary sequence determinants responsible for site-selective dephosphorylation of the PDGF beta-receptor by the receptor-like protein tyrosine phosphatase DEP-1.</title>
        <authorList>
            <person name="Persson C."/>
            <person name="Engstrom U."/>
            <person name="Mowbray S.L."/>
            <person name="Ostman A."/>
        </authorList>
    </citation>
    <scope>FUNCTION</scope>
</reference>
<reference key="12">
    <citation type="journal article" date="2002" name="Oncogene">
        <title>The transmembrane receptor protein tyrosine phosphatase DEP1 interacts with p120(ctn).</title>
        <authorList>
            <person name="Holsinger L.J."/>
            <person name="Ward K."/>
            <person name="Duffield B."/>
            <person name="Zachwieja J."/>
            <person name="Jallal B."/>
        </authorList>
    </citation>
    <scope>FUNCTION</scope>
    <scope>INTERACTION WITH CTNNB1 AND JUP</scope>
    <scope>MUTAGENESIS OF ASP-1205 AND CYS-1239</scope>
    <scope>TISSUE SPECIFICITY</scope>
    <scope>SUBCELLULAR LOCATION</scope>
</reference>
<reference key="13">
    <citation type="journal article" date="2003" name="J. Biol. Chem.">
        <title>Hepatocyte growth factor receptor tyrosine kinase met is a substrate of the receptor protein-tyrosine phosphatase DEP-1.</title>
        <authorList>
            <person name="Palka H.L."/>
            <person name="Park M."/>
            <person name="Tonks N.K."/>
        </authorList>
    </citation>
    <scope>FUNCTION</scope>
    <scope>INTERACTION WITH CTNNB1; GRB2; GAB1 AND JUP</scope>
    <scope>MUTAGENESIS OF ASP-1205 AND CYS-1239</scope>
</reference>
<reference key="14">
    <citation type="journal article" date="2003" name="J. Cell Biol.">
        <title>The tyrosine phosphatase CD148 is excluded from the immunologic synapse and down-regulates prolonged T cell signaling.</title>
        <authorList>
            <person name="Lin J."/>
            <person name="Weiss A."/>
        </authorList>
    </citation>
    <scope>FUNCTION</scope>
    <scope>SUBCELLULAR LOCATION</scope>
</reference>
<reference key="15">
    <citation type="journal article" date="2004" name="J. Cell Sci.">
        <title>The tyrosine phosphatase DEP-1 induces cytoskeletal rearrangements, aberrant cell-substratum interactions and a reduction in cell proliferation.</title>
        <authorList>
            <person name="Kellie S."/>
            <person name="Craggs G."/>
            <person name="Bird I.N."/>
            <person name="Jones G.E."/>
        </authorList>
    </citation>
    <scope>FUNCTION</scope>
</reference>
<reference key="16">
    <citation type="journal article" date="2005" name="J. Proteome Res.">
        <title>Human plasma N-glycoproteome analysis by immunoaffinity subtraction, hydrazide chemistry, and mass spectrometry.</title>
        <authorList>
            <person name="Liu T."/>
            <person name="Qian W.-J."/>
            <person name="Gritsenko M.A."/>
            <person name="Camp D.G. II"/>
            <person name="Monroe M.E."/>
            <person name="Moore R.J."/>
            <person name="Smith R.D."/>
        </authorList>
    </citation>
    <scope>GLYCOSYLATION [LARGE SCALE ANALYSIS] AT ASN-342; ASN-351; ASN-391 AND ASN-396</scope>
    <source>
        <tissue>Plasma</tissue>
    </source>
</reference>
<reference key="17">
    <citation type="journal article" date="2006" name="Cancer Res.">
        <title>The receptor-type protein tyrosine phosphatase J antagonizes the biochemical and biological effects of RET-derived oncoproteins.</title>
        <authorList>
            <person name="Iervolino A."/>
            <person name="Iuliano R."/>
            <person name="Trapasso F."/>
            <person name="Viglietto G."/>
            <person name="Melillo R.M."/>
            <person name="Carlomagno F."/>
            <person name="Santoro M."/>
            <person name="Fusco A."/>
        </authorList>
    </citation>
    <scope>RETRACTED PAPER</scope>
</reference>
<reference key="18">
    <citation type="journal article" date="2018" name="Cancer Res.">
        <authorList>
            <person name="Iervolino A."/>
            <person name="Iuliano R."/>
            <person name="Trapasso F."/>
            <person name="Viglietto G."/>
            <person name="Melillo R.M."/>
            <person name="Carlomagno F."/>
            <person name="Santoro M."/>
            <person name="Fusco A."/>
        </authorList>
    </citation>
    <scope>RETRACTION NOTICE OF PUBMED:16778204</scope>
</reference>
<reference key="19">
    <citation type="journal article" date="2006" name="Oncogene">
        <title>DEP-1 protein tyrosine phosphatase inhibits proliferation and migration of colon carcinoma cells and is upregulated by protective nutrients.</title>
        <authorList>
            <person name="Balavenkatraman K.K."/>
            <person name="Jandt E."/>
            <person name="Friedrich K."/>
            <person name="Kautenburger T."/>
            <person name="Pool-Zobel B.L."/>
            <person name="Ostman A."/>
            <person name="Bohmer F.D."/>
        </authorList>
    </citation>
    <scope>FUNCTION</scope>
</reference>
<reference key="20">
    <citation type="journal article" date="2008" name="Biochem. J.">
        <title>The tyrosine phosphatase CD148 interacts with the p85 regulatory subunit of phosphoinositide 3-kinase.</title>
        <authorList>
            <person name="Tsuboi N."/>
            <person name="Utsunomiya T."/>
            <person name="Roberts R.L."/>
            <person name="Ito H."/>
            <person name="Takahashi K."/>
            <person name="Noda M."/>
            <person name="Takahashi T."/>
        </authorList>
    </citation>
    <scope>FUNCTION</scope>
    <scope>MUTAGENESIS OF ASP-1205</scope>
    <scope>SUBCELLULAR LOCATION</scope>
</reference>
<reference key="21">
    <citation type="journal article" date="2008" name="Nucleic Acids Res.">
        <title>The structure of the 5'-end of the protein-tyrosine phosphatase PTPRJ mRNA reveals a novel mechanism for translation attenuation.</title>
        <authorList>
            <person name="Karagyozov L."/>
            <person name="Godfrey R."/>
            <person name="Boehmer S.A."/>
            <person name="Petermann A."/>
            <person name="Hoelters S."/>
            <person name="Ostman A."/>
            <person name="Boehmer F.D."/>
        </authorList>
    </citation>
    <scope>ALTERNATIVE SPLICING (ISOFORM 3)</scope>
</reference>
<reference key="22">
    <citation type="journal article" date="2009" name="Blood">
        <title>The tyrosine phosphatase CD148 is an essential positive regulator of platelet activation and thrombosis.</title>
        <authorList>
            <person name="Senis Y.A."/>
            <person name="Tomlinson M.G."/>
            <person name="Ellison S."/>
            <person name="Mazharian A."/>
            <person name="Lim J."/>
            <person name="Zhao Y."/>
            <person name="Kornerup K.N."/>
            <person name="Auger J.M."/>
            <person name="Thomas S.G."/>
            <person name="Dhanjal T."/>
            <person name="Kalia N."/>
            <person name="Zhu J.W."/>
            <person name="Weiss A."/>
            <person name="Watson S.P."/>
        </authorList>
    </citation>
    <scope>SUBUNIT</scope>
</reference>
<reference key="23">
    <citation type="journal article" date="2009" name="Curr. Biol.">
        <title>An unbiased screen identifies DEP-1 tumor suppressor as a phosphatase controlling EGFR endocytosis.</title>
        <authorList>
            <person name="Tarcic G."/>
            <person name="Boguslavsky S.K."/>
            <person name="Wakim J."/>
            <person name="Kiuchi T."/>
            <person name="Liu A."/>
            <person name="Reinitz F."/>
            <person name="Nathanson D."/>
            <person name="Takahashi T."/>
            <person name="Mischel P.S."/>
            <person name="Ng T."/>
            <person name="Yarden Y."/>
        </authorList>
    </citation>
    <scope>FUNCTION IN EGFR REGULATION</scope>
    <scope>MUTAGENESIS OF ASP-1205 AND CYS-1239</scope>
    <scope>SUBCELLULAR LOCATION</scope>
</reference>
<reference key="24">
    <citation type="journal article" date="2009" name="J. Biol. Chem.">
        <title>Density-enhanced phosphatase 1 regulates phosphorylation of tight junction proteins and enhances barrier function of epithelial cells.</title>
        <authorList>
            <person name="Sallee J.L."/>
            <person name="Burridge K."/>
        </authorList>
    </citation>
    <scope>FUNCTION</scope>
    <scope>MUTAGENESIS OF ASP-1205 AND CYS-1239</scope>
    <scope>SUBCELLULAR LOCATION</scope>
</reference>
<reference key="25">
    <citation type="journal article" date="2009" name="J. Biol. Chem.">
        <title>Tumor suppressor density-enhanced phosphatase-1 (DEP-1) inhibits the RAS pathway by direct dephosphorylation of ERK1/2 kinases.</title>
        <authorList>
            <person name="Sacco F."/>
            <person name="Tinti M."/>
            <person name="Palma A."/>
            <person name="Ferrari E."/>
            <person name="Nardozza A.P."/>
            <person name="Hooft van Huijsduijnen R."/>
            <person name="Takahashi T."/>
            <person name="Castagnoli L."/>
            <person name="Cesareni G."/>
        </authorList>
    </citation>
    <scope>FUNCTION</scope>
    <scope>MUTAGENESIS OF LYS-1016 AND ASP-1205</scope>
</reference>
<reference key="26">
    <citation type="journal article" date="2009" name="J. Proteome Res.">
        <title>Glycoproteomics analysis of human liver tissue by combination of multiple enzyme digestion and hydrazide chemistry.</title>
        <authorList>
            <person name="Chen R."/>
            <person name="Jiang X."/>
            <person name="Sun D."/>
            <person name="Han G."/>
            <person name="Wang F."/>
            <person name="Ye M."/>
            <person name="Wang L."/>
            <person name="Zou H."/>
        </authorList>
    </citation>
    <scope>GLYCOSYLATION [LARGE SCALE ANALYSIS] AT ASN-413 AND ASN-937</scope>
    <source>
        <tissue>Liver</tissue>
    </source>
</reference>
<reference key="27">
    <citation type="journal article" date="2009" name="Mol. Cell. Biol.">
        <title>New role for the protein tyrosine phosphatase DEP-1 in Akt activation and endothelial cell survival.</title>
        <authorList>
            <person name="Chabot C."/>
            <person name="Spring K."/>
            <person name="Gratton J.P."/>
            <person name="Elchebly M."/>
            <person name="Royal I."/>
        </authorList>
    </citation>
    <scope>FUNCTION</scope>
    <scope>MUTAGENESIS OF ASP-1205 AND CYS-1239</scope>
</reference>
<reference key="28">
    <citation type="journal article" date="2011" name="Brain Pathol.">
        <title>Loss of the protein-tyrosine phosphatase DEP-1/PTPRJ drives meningioma cell motility.</title>
        <authorList>
            <person name="Petermann A."/>
            <person name="Haase D."/>
            <person name="Wetzel A."/>
            <person name="Balavenkatraman K.K."/>
            <person name="Tenev T."/>
            <person name="Guhrs K.H."/>
            <person name="Friedrich S."/>
            <person name="Nakamura M."/>
            <person name="Mawrin C."/>
            <person name="Bohmer F.D."/>
        </authorList>
    </citation>
    <scope>FUNCTION</scope>
</reference>
<reference key="29">
    <citation type="journal article" date="2010" name="Biochem. J.">
        <title>Phosphatome profiling reveals PTPN2, PTPRJ and PTEN as potent negative regulators of PKB/Akt activation in Ras-mutated cancer cells.</title>
        <authorList>
            <person name="Omerovic J."/>
            <person name="Clague M.J."/>
            <person name="Prior I.A."/>
        </authorList>
    </citation>
    <scope>FUNCTION</scope>
</reference>
<reference key="30">
    <citation type="journal article" date="2011" name="J. Biol. Chem.">
        <title>Protein-tyrosine phosphatase DEP-1 controls receptor tyrosine kinase FLT3 signaling.</title>
        <authorList>
            <person name="Arora D."/>
            <person name="Stopp S."/>
            <person name="Bohmer S.A."/>
            <person name="Schons J."/>
            <person name="Godfrey R."/>
            <person name="Masson K."/>
            <person name="Razumovskaya E."/>
            <person name="Ronnstrand L."/>
            <person name="Tanzer S."/>
            <person name="Bauer R."/>
            <person name="Bohmer F.D."/>
            <person name="Muller J.P."/>
        </authorList>
    </citation>
    <scope>FUNCTION</scope>
    <scope>INTERACTION WITH FLT3</scope>
    <scope>MUTAGENESIS OF ASP-1205 AND CYS-1239</scope>
</reference>
<reference key="31">
    <citation type="journal article" date="2013" name="J. Proteome Res.">
        <title>Toward a comprehensive characterization of a human cancer cell phosphoproteome.</title>
        <authorList>
            <person name="Zhou H."/>
            <person name="Di Palma S."/>
            <person name="Preisinger C."/>
            <person name="Peng M."/>
            <person name="Polat A.N."/>
            <person name="Heck A.J."/>
            <person name="Mohammed S."/>
        </authorList>
    </citation>
    <scope>PHOSPHORYLATION [LARGE SCALE ANALYSIS] AT SER-1009</scope>
    <scope>IDENTIFICATION BY MASS SPECTROMETRY [LARGE SCALE ANALYSIS]</scope>
    <source>
        <tissue>Cervix carcinoma</tissue>
    </source>
</reference>
<reference key="32">
    <citation type="journal article" date="2019" name="Blood">
        <title>Loss-of-function mutations in PTPRJ cause a new form of inherited thrombocytopenia.</title>
        <authorList>
            <person name="Marconi C."/>
            <person name="Di Buduo C.A."/>
            <person name="LeVine K."/>
            <person name="Barozzi S."/>
            <person name="Faleschini M."/>
            <person name="Bozzi V."/>
            <person name="Palombo F."/>
            <person name="McKinstry S."/>
            <person name="Lassandro G."/>
            <person name="Giordano P."/>
            <person name="Noris P."/>
            <person name="Balduini C.L."/>
            <person name="Savoia A."/>
            <person name="Balduini A."/>
            <person name="Pippucci T."/>
            <person name="Seri M."/>
            <person name="Katsanis N."/>
            <person name="Pecci A."/>
        </authorList>
    </citation>
    <scope>INVOLVEMENT IN THC10</scope>
    <scope>FUNCTION</scope>
</reference>
<reference key="33">
    <citation type="journal article" date="2020" name="PLoS ONE">
        <title>The translation attenuating arginine-rich sequence in the extended signal peptide of the protein-tyrosine phosphatase PTPRJ/DEP1 is conserved in mammals.</title>
        <authorList>
            <person name="Karagyozov L."/>
            <person name="Grozdanov P.N."/>
            <person name="Boehmer F.D."/>
        </authorList>
    </citation>
    <scope>ALTERNATIVE SPLICING (ISOFORM 3)</scope>
</reference>
<reference key="34">
    <citation type="submission" date="2006-10" db="PDB data bank">
        <title>Solution structure of the fourth FN3 domain of human receptor-type tyrosine-protein phosphatase eta.</title>
        <authorList>
            <consortium name="RIKEN structural genomics initiative (RSGI)"/>
        </authorList>
    </citation>
    <scope>STRUCTURE BY NMR OF 366-456</scope>
</reference>
<reference key="35">
    <citation type="journal article" date="2004" name="Oncogene">
        <title>The tyrosine phosphatase PTPRJ/DEP-1 genotype affects thyroid carcinogenesis.</title>
        <authorList>
            <person name="Iuliano R."/>
            <person name="Le Pera I."/>
            <person name="Cristofaro C."/>
            <person name="Baudi F."/>
            <person name="Arturi F."/>
            <person name="Pallante P."/>
            <person name="Martelli M.L."/>
            <person name="Trapasso F."/>
            <person name="Chiariotti L."/>
            <person name="Fusco A."/>
        </authorList>
    </citation>
    <scope>VARIANTS PRO-276; GLN-326 AND ASP-872</scope>
</reference>
<reference key="36">
    <citation type="journal article" date="2017" name="Oncotarget">
        <title>A novel splice variant of the protein tyrosine phosphatase PTPRJ that encodes for a soluble protein involved in angiogenesis.</title>
        <authorList>
            <person name="Bilotta A."/>
            <person name="Dattilo V."/>
            <person name="D'Agostino S."/>
            <person name="Belviso S."/>
            <person name="Scalise S."/>
            <person name="Bilotta M."/>
            <person name="Gaudio E."/>
            <person name="Paduano F."/>
            <person name="Perrotti N."/>
            <person name="Florio T."/>
            <person name="Fusco A."/>
            <person name="Iuliano R."/>
            <person name="Trapasso F."/>
        </authorList>
    </citation>
    <scope>ALTERNATIVE SPLICING (ISOFORM 2)</scope>
    <scope>FUNCTION (ISOFORM 2)</scope>
    <scope>SUBCELLULAR LOCATION (ISOFORM 2)</scope>
    <scope>TISSUE SPECIFICITY (ISOFORM 2)</scope>
    <scope>GLYCOSYLATION (ISOFORM 2)</scope>
</reference>
<accession>Q12913</accession>
<accession>Q15255</accession>
<accession>Q6P4H4</accession>
<accession>Q8NHM2</accession>
<accession>Q9UDA9</accession>
<keyword id="KW-0002">3D-structure</keyword>
<keyword id="KW-0024">Alternative initiation</keyword>
<keyword id="KW-0025">Alternative splicing</keyword>
<keyword id="KW-0037">Angiogenesis</keyword>
<keyword id="KW-0965">Cell junction</keyword>
<keyword id="KW-1003">Cell membrane</keyword>
<keyword id="KW-0966">Cell projection</keyword>
<keyword id="KW-0903">Direct protein sequencing</keyword>
<keyword id="KW-0325">Glycoprotein</keyword>
<keyword id="KW-0378">Hydrolase</keyword>
<keyword id="KW-0472">Membrane</keyword>
<keyword id="KW-0597">Phosphoprotein</keyword>
<keyword id="KW-0904">Protein phosphatase</keyword>
<keyword id="KW-1267">Proteomics identification</keyword>
<keyword id="KW-1185">Reference proteome</keyword>
<keyword id="KW-0677">Repeat</keyword>
<keyword id="KW-0964">Secreted</keyword>
<keyword id="KW-0732">Signal</keyword>
<keyword id="KW-0812">Transmembrane</keyword>
<keyword id="KW-1133">Transmembrane helix</keyword>
<proteinExistence type="evidence at protein level"/>
<comment type="function">
    <text evidence="2 8 9 10 12 13 14 15 18 19 21 24 25 26 27 28 29 31 35 36">Tyrosine phosphatase which dephosphorylates or contributes to the dephosphorylation of CTNND1, FLT3, PDGFRB, MET, KDR, LYN, SRC, MAPK1, MAPK3, EGFR, TJP1, OCLN, PIK3R1 and PIK3R2 (PubMed:10821867, PubMed:12062403, PubMed:12370829, PubMed:12475979, PubMed:18348712, PubMed:19494114, PubMed:19922411, PubMed:21262971). Plays a role in cell adhesion, migration, proliferation and differentiation (PubMed:12370829, PubMed:14709717, PubMed:16682945, PubMed:19836242). Has a role in megakaryocytes and platelet formation (PubMed:30591527). Involved in vascular development (By similarity). Regulator of macrophage adhesion and spreading (By similarity). Positively affects cell-matrix adhesion (By similarity). Positive regulator of platelet activation and thrombosis. Negative regulator of cell proliferation (PubMed:16682945). Negative regulator of PDGF-stimulated cell migration; through dephosphorylation of PDGFR (PubMed:21091576). Positive regulator of endothelial cell survival, as well as of VEGF-induced SRC and AKT activation; through KDR dephosphorylation (PubMed:18936167). Negative regulator of EGFR signaling pathway; through EGFR dephosphorylation (PubMed:19836242). Enhances the barrier function of epithelial junctions during reassembly (PubMed:19332538). Negatively regulates T-cell receptor (TCR) signaling (PubMed:11259588, PubMed:9531590, PubMed:9780142). Upon T-cell TCR activation, it is up-regulated and excluded from the immunological synapses, while upon T-cell-antigen presenting cells (APC) disengagement, it is no longer excluded and can dephosphorylate PLCG1 and LAT to down-regulate prolongation of signaling (PubMed:11259588, PubMed:12913111).</text>
</comment>
<comment type="function">
    <molecule>Isoform 2</molecule>
    <text evidence="30">Activates angiogenesis and cell migration (PubMed:28052032). Downregulates the expression of the endothelial adhesion molecules ICAM1 and VCAM1 (PubMed:28052032).</text>
</comment>
<comment type="catalytic activity">
    <reaction evidence="6">
        <text>O-phospho-L-tyrosyl-[protein] + H2O = L-tyrosyl-[protein] + phosphate</text>
        <dbReference type="Rhea" id="RHEA:10684"/>
        <dbReference type="Rhea" id="RHEA-COMP:10136"/>
        <dbReference type="Rhea" id="RHEA-COMP:20101"/>
        <dbReference type="ChEBI" id="CHEBI:15377"/>
        <dbReference type="ChEBI" id="CHEBI:43474"/>
        <dbReference type="ChEBI" id="CHEBI:46858"/>
        <dbReference type="ChEBI" id="CHEBI:61978"/>
        <dbReference type="EC" id="3.1.3.48"/>
    </reaction>
</comment>
<comment type="subunit">
    <text evidence="12 13 23 29">Monomer. Interacts with CTNNB1 (phosphorylated) and JUP (phosphorylated). Interacts with FLT3 (phosphorylated). Interacts with GAB1 and GRB2.</text>
</comment>
<comment type="interaction">
    <interactant intactId="EBI-2264500">
        <id>Q12913</id>
    </interactant>
    <interactant intactId="EBI-491549">
        <id>P35222</id>
        <label>CTNNB1</label>
    </interactant>
    <organismsDiffer>false</organismsDiffer>
    <experiments>2</experiments>
</comment>
<comment type="interaction">
    <interactant intactId="EBI-2264500">
        <id>Q12913</id>
    </interactant>
    <interactant intactId="EBI-701927">
        <id>O60716</id>
        <label>CTNND1</label>
    </interactant>
    <organismsDiffer>false</organismsDiffer>
    <experiments>5</experiments>
</comment>
<comment type="interaction">
    <interactant intactId="EBI-2264500">
        <id>Q12913</id>
    </interactant>
    <interactant intactId="EBI-641062">
        <id>P04626</id>
        <label>ERBB2</label>
    </interactant>
    <organismsDiffer>false</organismsDiffer>
    <experiments>2</experiments>
</comment>
<comment type="interaction">
    <interactant intactId="EBI-2264500">
        <id>Q12913</id>
    </interactant>
    <interactant intactId="EBI-1026718">
        <id>P17948</id>
        <label>FLT1</label>
    </interactant>
    <organismsDiffer>false</organismsDiffer>
    <experiments>2</experiments>
</comment>
<comment type="interaction">
    <interactant intactId="EBI-2264500">
        <id>Q12913</id>
    </interactant>
    <interactant intactId="EBI-517684">
        <id>Q13480</id>
        <label>GAB1</label>
    </interactant>
    <organismsDiffer>false</organismsDiffer>
    <experiments>2</experiments>
</comment>
<comment type="interaction">
    <interactant intactId="EBI-2264500">
        <id>Q12913</id>
    </interactant>
    <interactant intactId="EBI-286316">
        <id>P10912</id>
        <label>GHR</label>
    </interactant>
    <organismsDiffer>false</organismsDiffer>
    <experiments>2</experiments>
</comment>
<comment type="interaction">
    <interactant intactId="EBI-2264500">
        <id>Q12913</id>
    </interactant>
    <interactant intactId="EBI-1005487">
        <id>P35968</id>
        <label>KDR</label>
    </interactant>
    <organismsDiffer>false</organismsDiffer>
    <experiments>4</experiments>
</comment>
<comment type="interaction">
    <interactant intactId="EBI-2264500">
        <id>Q12913</id>
    </interactant>
    <interactant intactId="EBI-959949">
        <id>P28482</id>
        <label>MAPK1</label>
    </interactant>
    <organismsDiffer>false</organismsDiffer>
    <experiments>7</experiments>
</comment>
<comment type="interaction">
    <interactant intactId="EBI-2264500">
        <id>Q12913</id>
    </interactant>
    <interactant intactId="EBI-73995">
        <id>P27361</id>
        <label>MAPK3</label>
    </interactant>
    <organismsDiffer>false</organismsDiffer>
    <experiments>5</experiments>
</comment>
<comment type="interaction">
    <interactant intactId="EBI-2264500">
        <id>Q12913</id>
    </interactant>
    <interactant intactId="EBI-1039152">
        <id>P08581</id>
        <label>MET</label>
    </interactant>
    <organismsDiffer>false</organismsDiffer>
    <experiments>5</experiments>
</comment>
<comment type="interaction">
    <interactant intactId="EBI-2264500">
        <id>Q12913</id>
    </interactant>
    <interactant intactId="EBI-641237">
        <id>P09619</id>
        <label>PDGFRB</label>
    </interactant>
    <organismsDiffer>false</organismsDiffer>
    <experiments>4</experiments>
</comment>
<comment type="interaction">
    <interactant intactId="EBI-2264500">
        <id>Q12913</id>
    </interactant>
    <interactant intactId="EBI-2257090">
        <id>Q02763</id>
        <label>TEK</label>
    </interactant>
    <organismsDiffer>false</organismsDiffer>
    <experiments>2</experiments>
</comment>
<comment type="subcellular location">
    <subcellularLocation>
        <location>Cell membrane</location>
        <topology>Single-pass type I membrane protein</topology>
    </subcellularLocation>
    <subcellularLocation>
        <location evidence="1">Cell projection</location>
        <location evidence="1">Ruffle membrane</location>
    </subcellularLocation>
    <subcellularLocation>
        <location>Cell junction</location>
    </subcellularLocation>
    <text>After T-cell stimulation, it is temporarily excluded from immunological synapses.</text>
</comment>
<comment type="subcellular location">
    <molecule>Isoform 2</molecule>
    <subcellularLocation>
        <location evidence="30">Secreted</location>
        <location evidence="30">Extracellular space</location>
    </subcellularLocation>
</comment>
<comment type="alternative products">
    <event type="alternative splicing"/>
    <event type="alternative initiation"/>
    <isoform>
        <id>Q12913-1</id>
        <name>1</name>
        <sequence type="displayed"/>
    </isoform>
    <isoform>
        <id>Q12913-2</id>
        <name>2</name>
        <name evidence="40">sPTPRJ</name>
        <sequence type="described" ref="VSP_043652 VSP_043653"/>
    </isoform>
    <isoform>
        <id>Q12913-3</id>
        <name>3</name>
        <sequence type="described" ref="VSP_060928"/>
    </isoform>
    <text evidence="20 45">Isoform 1 and isoform 3 result from alternative initiation of translation within the same 5' exon but produce the same functional protein following cleavage of their respective signal peptides (PubMed:18603590). Alternative initiation is probably a conserved mechanism in mammals to regulate the overall expression of that functional protein (PubMed:18603590, PubMed:33296397).</text>
</comment>
<comment type="tissue specificity">
    <text evidence="12 34 35">Expressed in the promyelocytic cell line HL-60, the granulocyte-macrophage colony-stimulating factor-dependent leukemic cell line F-36P, and the IL3 and erythropoietin-dependent leukemic cell line F-36E. Expressed predominantly in epithelial cells and lymphocytes. Enhanced expression at high cell density.</text>
</comment>
<comment type="tissue specificity">
    <molecule>Isoform 2</molecule>
    <text evidence="30">Expressed in the brain.</text>
</comment>
<comment type="PTM">
    <text evidence="17 22 35">N- and O-glycosylated.</text>
</comment>
<comment type="PTM">
    <molecule>Isoform 2</molecule>
    <text evidence="30">N-glycosylated.</text>
</comment>
<comment type="disease" evidence="31">
    <disease id="DI-06750">
        <name>Thrombocytopenia 10</name>
        <acronym>THC10</acronym>
        <description>A form of thrombocytopenia, a hematologic disorder defined by a decrease in the number of platelets in circulating blood, resulting in the potential for increased bleeding and decreased ability for clotting. THC10 is an autosomal recessive form characterized by decreased numbers of platelets apparent from birth or early childhood.</description>
        <dbReference type="MIM" id="620484"/>
    </disease>
    <text>The disease is caused by variants affecting the gene represented in this entry.</text>
</comment>
<comment type="miscellaneous">
    <molecule>Isoform 2</molecule>
    <text evidence="30">Expressed in several normal and cancer cell lines, including A549, HUVEC, MCF7, HeLa, A172 and ADF cells (at protein level) (PubMed:28052032). Up-regulated in high-grade glioma samples (PubMed:28052032).</text>
</comment>
<comment type="similarity">
    <text evidence="42">Belongs to the protein-tyrosine phosphatase family. Receptor class 3 subfamily.</text>
</comment>
<comment type="caution">
    <text evidence="43 44">Originally thought to dephosphorylate RET. However this paper was retracted due to manipulation of immunoblot data.</text>
</comment>
<comment type="online information" name="Atlas of Genetics and Cytogenetics in Oncology and Haematology">
    <link uri="https://atlasgeneticsoncology.org/gene/41932/PTPRJ"/>
</comment>
<name>PTPRJ_HUMAN</name>
<gene>
    <name type="primary">PTPRJ</name>
    <name type="synonym">DEP1</name>
</gene>
<dbReference type="EC" id="3.1.3.48"/>
<dbReference type="EMBL" id="U10886">
    <property type="protein sequence ID" value="AAB36687.1"/>
    <property type="molecule type" value="mRNA"/>
</dbReference>
<dbReference type="EMBL" id="D37781">
    <property type="protein sequence ID" value="BAA07035.1"/>
    <property type="molecule type" value="mRNA"/>
</dbReference>
<dbReference type="EMBL" id="AC026975">
    <property type="status" value="NOT_ANNOTATED_CDS"/>
    <property type="molecule type" value="Genomic_DNA"/>
</dbReference>
<dbReference type="EMBL" id="AC103828">
    <property type="status" value="NOT_ANNOTATED_CDS"/>
    <property type="molecule type" value="Genomic_DNA"/>
</dbReference>
<dbReference type="EMBL" id="BC063417">
    <property type="protein sequence ID" value="AAH63417.1"/>
    <property type="molecule type" value="mRNA"/>
</dbReference>
<dbReference type="EMBL" id="AH011675">
    <property type="protein sequence ID" value="AAM69432.1"/>
    <property type="molecule type" value="Genomic_DNA"/>
</dbReference>
<dbReference type="CCDS" id="CCDS44596.1">
    <molecule id="Q12913-2"/>
</dbReference>
<dbReference type="CCDS" id="CCDS7945.1">
    <molecule id="Q12913-1"/>
</dbReference>
<dbReference type="PIR" id="I38670">
    <property type="entry name" value="I38670"/>
</dbReference>
<dbReference type="RefSeq" id="NP_001091973.1">
    <molecule id="Q12913-2"/>
    <property type="nucleotide sequence ID" value="NM_001098503.2"/>
</dbReference>
<dbReference type="RefSeq" id="NP_002834.3">
    <molecule id="Q12913-1"/>
    <property type="nucleotide sequence ID" value="NM_002843.3"/>
</dbReference>
<dbReference type="PDB" id="2CFV">
    <property type="method" value="X-ray"/>
    <property type="resolution" value="2.50 A"/>
    <property type="chains" value="A=1019-1311"/>
</dbReference>
<dbReference type="PDB" id="2DLE">
    <property type="method" value="NMR"/>
    <property type="chains" value="A=366-456"/>
</dbReference>
<dbReference type="PDB" id="2NZ6">
    <property type="method" value="X-ray"/>
    <property type="resolution" value="2.30 A"/>
    <property type="chains" value="A=1019-1311"/>
</dbReference>
<dbReference type="PDB" id="7U01">
    <property type="method" value="X-ray"/>
    <property type="resolution" value="2.30 A"/>
    <property type="chains" value="A/B/C/D=206-364"/>
</dbReference>
<dbReference type="PDB" id="7U08">
    <property type="method" value="X-ray"/>
    <property type="resolution" value="3.31 A"/>
    <property type="chains" value="A=37-374"/>
</dbReference>
<dbReference type="PDBsum" id="2CFV"/>
<dbReference type="PDBsum" id="2DLE"/>
<dbReference type="PDBsum" id="2NZ6"/>
<dbReference type="PDBsum" id="7U01"/>
<dbReference type="PDBsum" id="7U08"/>
<dbReference type="SMR" id="Q12913"/>
<dbReference type="BioGRID" id="111759">
    <property type="interactions" value="98"/>
</dbReference>
<dbReference type="FunCoup" id="Q12913">
    <property type="interactions" value="557"/>
</dbReference>
<dbReference type="IntAct" id="Q12913">
    <property type="interactions" value="88"/>
</dbReference>
<dbReference type="MINT" id="Q12913"/>
<dbReference type="STRING" id="9606.ENSP00000400010"/>
<dbReference type="BindingDB" id="Q12913"/>
<dbReference type="ChEMBL" id="CHEMBL3692"/>
<dbReference type="DEPOD" id="PTPRJ"/>
<dbReference type="GlyConnect" id="1707">
    <property type="glycosylation" value="7 N-Linked glycans (4 sites)"/>
</dbReference>
<dbReference type="GlyCosmos" id="Q12913">
    <property type="glycosylation" value="36 sites, 8 glycans"/>
</dbReference>
<dbReference type="GlyGen" id="Q12913">
    <property type="glycosylation" value="45 sites, 41 N-linked glycans (18 sites), 3 O-linked glycans (7 sites)"/>
</dbReference>
<dbReference type="iPTMnet" id="Q12913"/>
<dbReference type="PhosphoSitePlus" id="Q12913"/>
<dbReference type="SwissPalm" id="Q12913"/>
<dbReference type="BioMuta" id="PTPRJ"/>
<dbReference type="DMDM" id="166899088"/>
<dbReference type="jPOST" id="Q12913"/>
<dbReference type="MassIVE" id="Q12913"/>
<dbReference type="PaxDb" id="9606-ENSP00000400010"/>
<dbReference type="PeptideAtlas" id="Q12913"/>
<dbReference type="ProteomicsDB" id="59024">
    <molecule id="Q12913-1"/>
</dbReference>
<dbReference type="ProteomicsDB" id="59025">
    <molecule id="Q12913-2"/>
</dbReference>
<dbReference type="Pumba" id="Q12913"/>
<dbReference type="Antibodypedia" id="1162">
    <property type="antibodies" value="528 antibodies from 35 providers"/>
</dbReference>
<dbReference type="DNASU" id="5795"/>
<dbReference type="Ensembl" id="ENST00000418331.7">
    <molecule id="Q12913-1"/>
    <property type="protein sequence ID" value="ENSP00000400010.2"/>
    <property type="gene ID" value="ENSG00000149177.15"/>
</dbReference>
<dbReference type="Ensembl" id="ENST00000440289.6">
    <molecule id="Q12913-2"/>
    <property type="protein sequence ID" value="ENSP00000409733.2"/>
    <property type="gene ID" value="ENSG00000149177.15"/>
</dbReference>
<dbReference type="GeneID" id="5795"/>
<dbReference type="KEGG" id="hsa:5795"/>
<dbReference type="MANE-Select" id="ENST00000418331.7">
    <property type="protein sequence ID" value="ENSP00000400010.2"/>
    <property type="RefSeq nucleotide sequence ID" value="NM_002843.4"/>
    <property type="RefSeq protein sequence ID" value="NP_002834.3"/>
</dbReference>
<dbReference type="UCSC" id="uc001ngo.5">
    <molecule id="Q12913-1"/>
    <property type="organism name" value="human"/>
</dbReference>
<dbReference type="AGR" id="HGNC:9673"/>
<dbReference type="CTD" id="5795"/>
<dbReference type="DisGeNET" id="5795"/>
<dbReference type="GeneCards" id="PTPRJ"/>
<dbReference type="HGNC" id="HGNC:9673">
    <property type="gene designation" value="PTPRJ"/>
</dbReference>
<dbReference type="HPA" id="ENSG00000149177">
    <property type="expression patterns" value="Low tissue specificity"/>
</dbReference>
<dbReference type="MalaCards" id="PTPRJ"/>
<dbReference type="MIM" id="600925">
    <property type="type" value="gene"/>
</dbReference>
<dbReference type="MIM" id="620484">
    <property type="type" value="phenotype"/>
</dbReference>
<dbReference type="neXtProt" id="NX_Q12913"/>
<dbReference type="OpenTargets" id="ENSG00000149177"/>
<dbReference type="PharmGKB" id="PA34018"/>
<dbReference type="VEuPathDB" id="HostDB:ENSG00000149177"/>
<dbReference type="eggNOG" id="KOG0791">
    <property type="taxonomic scope" value="Eukaryota"/>
</dbReference>
<dbReference type="GeneTree" id="ENSGT00940000156870"/>
<dbReference type="HOGENOM" id="CLU_001541_2_0_1"/>
<dbReference type="InParanoid" id="Q12913"/>
<dbReference type="OMA" id="PGMMYSF"/>
<dbReference type="OrthoDB" id="10253954at2759"/>
<dbReference type="PAN-GO" id="Q12913">
    <property type="GO annotations" value="3 GO annotations based on evolutionary models"/>
</dbReference>
<dbReference type="PhylomeDB" id="Q12913"/>
<dbReference type="TreeFam" id="TF351926"/>
<dbReference type="BRENDA" id="3.1.3.48">
    <property type="organism ID" value="2681"/>
</dbReference>
<dbReference type="PathwayCommons" id="Q12913"/>
<dbReference type="Reactome" id="R-HSA-202427">
    <property type="pathway name" value="Phosphorylation of CD3 and TCR zeta chains"/>
</dbReference>
<dbReference type="Reactome" id="R-HSA-6798695">
    <property type="pathway name" value="Neutrophil degranulation"/>
</dbReference>
<dbReference type="Reactome" id="R-HSA-6807004">
    <property type="pathway name" value="Negative regulation of MET activity"/>
</dbReference>
<dbReference type="Reactome" id="R-HSA-9706369">
    <property type="pathway name" value="Negative regulation of FLT3"/>
</dbReference>
<dbReference type="SignaLink" id="Q12913"/>
<dbReference type="SIGNOR" id="Q12913"/>
<dbReference type="BioGRID-ORCS" id="5795">
    <property type="hits" value="18 hits in 1177 CRISPR screens"/>
</dbReference>
<dbReference type="ChiTaRS" id="PTPRJ">
    <property type="organism name" value="human"/>
</dbReference>
<dbReference type="EvolutionaryTrace" id="Q12913"/>
<dbReference type="GeneWiki" id="PTPRJ"/>
<dbReference type="GenomeRNAi" id="5795"/>
<dbReference type="Pharos" id="Q12913">
    <property type="development level" value="Tbio"/>
</dbReference>
<dbReference type="PRO" id="PR:Q12913"/>
<dbReference type="Proteomes" id="UP000005640">
    <property type="component" value="Chromosome 11"/>
</dbReference>
<dbReference type="RNAct" id="Q12913">
    <property type="molecule type" value="protein"/>
</dbReference>
<dbReference type="Bgee" id="ENSG00000149177">
    <property type="expression patterns" value="Expressed in ileal mucosa and 182 other cell types or tissues"/>
</dbReference>
<dbReference type="ExpressionAtlas" id="Q12913">
    <property type="expression patterns" value="baseline and differential"/>
</dbReference>
<dbReference type="GO" id="GO:0030054">
    <property type="term" value="C:cell junction"/>
    <property type="evidence" value="ECO:0000314"/>
    <property type="project" value="HPA"/>
</dbReference>
<dbReference type="GO" id="GO:0009986">
    <property type="term" value="C:cell surface"/>
    <property type="evidence" value="ECO:0000314"/>
    <property type="project" value="UniProtKB"/>
</dbReference>
<dbReference type="GO" id="GO:0005911">
    <property type="term" value="C:cell-cell junction"/>
    <property type="evidence" value="ECO:0000314"/>
    <property type="project" value="UniProtKB"/>
</dbReference>
<dbReference type="GO" id="GO:0070062">
    <property type="term" value="C:extracellular exosome"/>
    <property type="evidence" value="ECO:0007005"/>
    <property type="project" value="UniProtKB"/>
</dbReference>
<dbReference type="GO" id="GO:0001772">
    <property type="term" value="C:immunological synapse"/>
    <property type="evidence" value="ECO:0000314"/>
    <property type="project" value="UniProtKB"/>
</dbReference>
<dbReference type="GO" id="GO:0016604">
    <property type="term" value="C:nuclear body"/>
    <property type="evidence" value="ECO:0000314"/>
    <property type="project" value="HPA"/>
</dbReference>
<dbReference type="GO" id="GO:0005730">
    <property type="term" value="C:nucleolus"/>
    <property type="evidence" value="ECO:0000314"/>
    <property type="project" value="HPA"/>
</dbReference>
<dbReference type="GO" id="GO:0005654">
    <property type="term" value="C:nucleoplasm"/>
    <property type="evidence" value="ECO:0000314"/>
    <property type="project" value="HPA"/>
</dbReference>
<dbReference type="GO" id="GO:0005886">
    <property type="term" value="C:plasma membrane"/>
    <property type="evidence" value="ECO:0000314"/>
    <property type="project" value="UniProtKB"/>
</dbReference>
<dbReference type="GO" id="GO:0032587">
    <property type="term" value="C:ruffle membrane"/>
    <property type="evidence" value="ECO:0007669"/>
    <property type="project" value="UniProtKB-SubCell"/>
</dbReference>
<dbReference type="GO" id="GO:0035579">
    <property type="term" value="C:specific granule membrane"/>
    <property type="evidence" value="ECO:0000304"/>
    <property type="project" value="Reactome"/>
</dbReference>
<dbReference type="GO" id="GO:0008013">
    <property type="term" value="F:beta-catenin binding"/>
    <property type="evidence" value="ECO:0000353"/>
    <property type="project" value="UniProtKB"/>
</dbReference>
<dbReference type="GO" id="GO:0045296">
    <property type="term" value="F:cadherin binding"/>
    <property type="evidence" value="ECO:0000353"/>
    <property type="project" value="ARUK-UCL"/>
</dbReference>
<dbReference type="GO" id="GO:0070097">
    <property type="term" value="F:delta-catenin binding"/>
    <property type="evidence" value="ECO:0000353"/>
    <property type="project" value="UniProtKB"/>
</dbReference>
<dbReference type="GO" id="GO:0045295">
    <property type="term" value="F:gamma-catenin binding"/>
    <property type="evidence" value="ECO:0000353"/>
    <property type="project" value="UniProtKB"/>
</dbReference>
<dbReference type="GO" id="GO:0051019">
    <property type="term" value="F:mitogen-activated protein kinase binding"/>
    <property type="evidence" value="ECO:0000353"/>
    <property type="project" value="UniProtKB"/>
</dbReference>
<dbReference type="GO" id="GO:0016791">
    <property type="term" value="F:phosphatase activity"/>
    <property type="evidence" value="ECO:0000314"/>
    <property type="project" value="UniProtKB"/>
</dbReference>
<dbReference type="GO" id="GO:0005161">
    <property type="term" value="F:platelet-derived growth factor receptor binding"/>
    <property type="evidence" value="ECO:0000353"/>
    <property type="project" value="UniProtKB"/>
</dbReference>
<dbReference type="GO" id="GO:0019901">
    <property type="term" value="F:protein kinase binding"/>
    <property type="evidence" value="ECO:0000353"/>
    <property type="project" value="UniProtKB"/>
</dbReference>
<dbReference type="GO" id="GO:0004725">
    <property type="term" value="F:protein tyrosine phosphatase activity"/>
    <property type="evidence" value="ECO:0000314"/>
    <property type="project" value="UniProtKB"/>
</dbReference>
<dbReference type="GO" id="GO:0001525">
    <property type="term" value="P:angiogenesis"/>
    <property type="evidence" value="ECO:0007669"/>
    <property type="project" value="UniProtKB-KW"/>
</dbReference>
<dbReference type="GO" id="GO:0007411">
    <property type="term" value="P:axon guidance"/>
    <property type="evidence" value="ECO:0000318"/>
    <property type="project" value="GO_Central"/>
</dbReference>
<dbReference type="GO" id="GO:0030183">
    <property type="term" value="P:B cell differentiation"/>
    <property type="evidence" value="ECO:0000250"/>
    <property type="project" value="ARUK-UCL"/>
</dbReference>
<dbReference type="GO" id="GO:0007596">
    <property type="term" value="P:blood coagulation"/>
    <property type="evidence" value="ECO:0007669"/>
    <property type="project" value="Ensembl"/>
</dbReference>
<dbReference type="GO" id="GO:0060242">
    <property type="term" value="P:contact inhibition"/>
    <property type="evidence" value="ECO:0000303"/>
    <property type="project" value="UniProtKB"/>
</dbReference>
<dbReference type="GO" id="GO:0019221">
    <property type="term" value="P:cytokine-mediated signaling pathway"/>
    <property type="evidence" value="ECO:0000304"/>
    <property type="project" value="Reactome"/>
</dbReference>
<dbReference type="GO" id="GO:0042593">
    <property type="term" value="P:glucose homeostasis"/>
    <property type="evidence" value="ECO:0007669"/>
    <property type="project" value="Ensembl"/>
</dbReference>
<dbReference type="GO" id="GO:0007507">
    <property type="term" value="P:heart development"/>
    <property type="evidence" value="ECO:0007669"/>
    <property type="project" value="Ensembl"/>
</dbReference>
<dbReference type="GO" id="GO:0030308">
    <property type="term" value="P:negative regulation of cell growth"/>
    <property type="evidence" value="ECO:0000314"/>
    <property type="project" value="UniProtKB"/>
</dbReference>
<dbReference type="GO" id="GO:0030336">
    <property type="term" value="P:negative regulation of cell migration"/>
    <property type="evidence" value="ECO:0000314"/>
    <property type="project" value="UniProtKB"/>
</dbReference>
<dbReference type="GO" id="GO:0008285">
    <property type="term" value="P:negative regulation of cell population proliferation"/>
    <property type="evidence" value="ECO:0000314"/>
    <property type="project" value="UniProtKB"/>
</dbReference>
<dbReference type="GO" id="GO:0042059">
    <property type="term" value="P:negative regulation of epidermal growth factor receptor signaling pathway"/>
    <property type="evidence" value="ECO:0000315"/>
    <property type="project" value="UniProtKB"/>
</dbReference>
<dbReference type="GO" id="GO:0046627">
    <property type="term" value="P:negative regulation of insulin receptor signaling pathway"/>
    <property type="evidence" value="ECO:0007669"/>
    <property type="project" value="Ensembl"/>
</dbReference>
<dbReference type="GO" id="GO:0043407">
    <property type="term" value="P:negative regulation of MAP kinase activity"/>
    <property type="evidence" value="ECO:0000314"/>
    <property type="project" value="UniProtKB"/>
</dbReference>
<dbReference type="GO" id="GO:0051898">
    <property type="term" value="P:negative regulation of phosphatidylinositol 3-kinase/protein kinase B signal transduction"/>
    <property type="evidence" value="ECO:0000315"/>
    <property type="project" value="UniProtKB"/>
</dbReference>
<dbReference type="GO" id="GO:0010642">
    <property type="term" value="P:negative regulation of platelet-derived growth factor receptor signaling pathway"/>
    <property type="evidence" value="ECO:0000314"/>
    <property type="project" value="UniProtKB"/>
</dbReference>
<dbReference type="GO" id="GO:0050860">
    <property type="term" value="P:negative regulation of T cell receptor signaling pathway"/>
    <property type="evidence" value="ECO:0000314"/>
    <property type="project" value="UniProtKB"/>
</dbReference>
<dbReference type="GO" id="GO:0043116">
    <property type="term" value="P:negative regulation of vascular permeability"/>
    <property type="evidence" value="ECO:0000314"/>
    <property type="project" value="UniProtKB"/>
</dbReference>
<dbReference type="GO" id="GO:0048709">
    <property type="term" value="P:oligodendrocyte differentiation"/>
    <property type="evidence" value="ECO:0007669"/>
    <property type="project" value="Ensembl"/>
</dbReference>
<dbReference type="GO" id="GO:0035335">
    <property type="term" value="P:peptidyl-tyrosine dephosphorylation"/>
    <property type="evidence" value="ECO:0000314"/>
    <property type="project" value="UniProtKB"/>
</dbReference>
<dbReference type="GO" id="GO:0030220">
    <property type="term" value="P:platelet formation"/>
    <property type="evidence" value="ECO:0000315"/>
    <property type="project" value="UniProtKB"/>
</dbReference>
<dbReference type="GO" id="GO:0048008">
    <property type="term" value="P:platelet-derived growth factor receptor signaling pathway"/>
    <property type="evidence" value="ECO:0000315"/>
    <property type="project" value="UniProtKB"/>
</dbReference>
<dbReference type="GO" id="GO:0050918">
    <property type="term" value="P:positive chemotaxis"/>
    <property type="evidence" value="ECO:0000314"/>
    <property type="project" value="UniProtKB"/>
</dbReference>
<dbReference type="GO" id="GO:0050850">
    <property type="term" value="P:positive regulation of calcium-mediated signaling"/>
    <property type="evidence" value="ECO:0000250"/>
    <property type="project" value="ARUK-UCL"/>
</dbReference>
<dbReference type="GO" id="GO:0045785">
    <property type="term" value="P:positive regulation of cell adhesion"/>
    <property type="evidence" value="ECO:0000315"/>
    <property type="project" value="UniProtKB"/>
</dbReference>
<dbReference type="GO" id="GO:0060369">
    <property type="term" value="P:positive regulation of Fc receptor mediated stimulatory signaling pathway"/>
    <property type="evidence" value="ECO:0000250"/>
    <property type="project" value="ARUK-UCL"/>
</dbReference>
<dbReference type="GO" id="GO:0051894">
    <property type="term" value="P:positive regulation of focal adhesion assembly"/>
    <property type="evidence" value="ECO:0000315"/>
    <property type="project" value="UniProtKB"/>
</dbReference>
<dbReference type="GO" id="GO:0010759">
    <property type="term" value="P:positive regulation of macrophage chemotaxis"/>
    <property type="evidence" value="ECO:0007669"/>
    <property type="project" value="Ensembl"/>
</dbReference>
<dbReference type="GO" id="GO:0043410">
    <property type="term" value="P:positive regulation of MAPK cascade"/>
    <property type="evidence" value="ECO:0000250"/>
    <property type="project" value="ARUK-UCL"/>
</dbReference>
<dbReference type="GO" id="GO:0050766">
    <property type="term" value="P:positive regulation of phagocytosis"/>
    <property type="evidence" value="ECO:0000250"/>
    <property type="project" value="ARUK-UCL"/>
</dbReference>
<dbReference type="GO" id="GO:0051897">
    <property type="term" value="P:positive regulation of phosphatidylinositol 3-kinase/protein kinase B signal transduction"/>
    <property type="evidence" value="ECO:0000315"/>
    <property type="project" value="UniProtKB"/>
</dbReference>
<dbReference type="GO" id="GO:0010572">
    <property type="term" value="P:positive regulation of platelet activation"/>
    <property type="evidence" value="ECO:0007669"/>
    <property type="project" value="Ensembl"/>
</dbReference>
<dbReference type="GO" id="GO:0032760">
    <property type="term" value="P:positive regulation of tumor necrosis factor production"/>
    <property type="evidence" value="ECO:0000250"/>
    <property type="project" value="ARUK-UCL"/>
</dbReference>
<dbReference type="GO" id="GO:0030155">
    <property type="term" value="P:regulation of cell adhesion"/>
    <property type="evidence" value="ECO:0000315"/>
    <property type="project" value="UniProtKB"/>
</dbReference>
<dbReference type="GO" id="GO:0007165">
    <property type="term" value="P:signal transduction"/>
    <property type="evidence" value="ECO:0000318"/>
    <property type="project" value="GO_Central"/>
</dbReference>
<dbReference type="GO" id="GO:0050852">
    <property type="term" value="P:T cell receptor signaling pathway"/>
    <property type="evidence" value="ECO:0000304"/>
    <property type="project" value="Reactome"/>
</dbReference>
<dbReference type="GO" id="GO:0001570">
    <property type="term" value="P:vasculogenesis"/>
    <property type="evidence" value="ECO:0007669"/>
    <property type="project" value="Ensembl"/>
</dbReference>
<dbReference type="CDD" id="cd00063">
    <property type="entry name" value="FN3"/>
    <property type="match status" value="5"/>
</dbReference>
<dbReference type="CDD" id="cd14615">
    <property type="entry name" value="R-PTPc-J"/>
    <property type="match status" value="1"/>
</dbReference>
<dbReference type="FunFam" id="3.90.190.10:FF:000009">
    <property type="entry name" value="Receptor-type tyrosine-protein phosphatase beta"/>
    <property type="match status" value="1"/>
</dbReference>
<dbReference type="FunFam" id="2.60.40.10:FF:000362">
    <property type="entry name" value="Receptor-type tyrosine-protein phosphatase eta"/>
    <property type="match status" value="4"/>
</dbReference>
<dbReference type="FunFam" id="2.60.40.10:FF:001417">
    <property type="entry name" value="Receptor-type tyrosine-protein phosphatase eta"/>
    <property type="match status" value="1"/>
</dbReference>
<dbReference type="Gene3D" id="2.60.40.10">
    <property type="entry name" value="Immunoglobulins"/>
    <property type="match status" value="7"/>
</dbReference>
<dbReference type="Gene3D" id="3.90.190.10">
    <property type="entry name" value="Protein tyrosine phosphatase superfamily"/>
    <property type="match status" value="1"/>
</dbReference>
<dbReference type="IDEAL" id="IID00665"/>
<dbReference type="InterPro" id="IPR003961">
    <property type="entry name" value="FN3_dom"/>
</dbReference>
<dbReference type="InterPro" id="IPR036116">
    <property type="entry name" value="FN3_sf"/>
</dbReference>
<dbReference type="InterPro" id="IPR013783">
    <property type="entry name" value="Ig-like_fold"/>
</dbReference>
<dbReference type="InterPro" id="IPR029021">
    <property type="entry name" value="Prot-tyrosine_phosphatase-like"/>
</dbReference>
<dbReference type="InterPro" id="IPR000242">
    <property type="entry name" value="PTP_cat"/>
</dbReference>
<dbReference type="InterPro" id="IPR041201">
    <property type="entry name" value="PTPRJ_TM"/>
</dbReference>
<dbReference type="InterPro" id="IPR050713">
    <property type="entry name" value="RTP_Phos/Ushers"/>
</dbReference>
<dbReference type="InterPro" id="IPR016130">
    <property type="entry name" value="Tyr_Pase_AS"/>
</dbReference>
<dbReference type="InterPro" id="IPR003595">
    <property type="entry name" value="Tyr_Pase_cat"/>
</dbReference>
<dbReference type="InterPro" id="IPR000387">
    <property type="entry name" value="Tyr_Pase_dom"/>
</dbReference>
<dbReference type="PANTHER" id="PTHR46957">
    <property type="entry name" value="CYTOKINE RECEPTOR"/>
    <property type="match status" value="1"/>
</dbReference>
<dbReference type="PANTHER" id="PTHR46957:SF5">
    <property type="entry name" value="PROTEIN-TYROSINE-PHOSPHATASE"/>
    <property type="match status" value="1"/>
</dbReference>
<dbReference type="Pfam" id="PF00041">
    <property type="entry name" value="fn3"/>
    <property type="match status" value="4"/>
</dbReference>
<dbReference type="Pfam" id="PF18861">
    <property type="entry name" value="PTP_tm"/>
    <property type="match status" value="1"/>
</dbReference>
<dbReference type="Pfam" id="PF00102">
    <property type="entry name" value="Y_phosphatase"/>
    <property type="match status" value="1"/>
</dbReference>
<dbReference type="PRINTS" id="PR00700">
    <property type="entry name" value="PRTYPHPHTASE"/>
</dbReference>
<dbReference type="SMART" id="SM00060">
    <property type="entry name" value="FN3"/>
    <property type="match status" value="8"/>
</dbReference>
<dbReference type="SMART" id="SM00194">
    <property type="entry name" value="PTPc"/>
    <property type="match status" value="1"/>
</dbReference>
<dbReference type="SMART" id="SM00404">
    <property type="entry name" value="PTPc_motif"/>
    <property type="match status" value="1"/>
</dbReference>
<dbReference type="SUPFAM" id="SSF52799">
    <property type="entry name" value="(Phosphotyrosine protein) phosphatases II"/>
    <property type="match status" value="1"/>
</dbReference>
<dbReference type="SUPFAM" id="SSF49265">
    <property type="entry name" value="Fibronectin type III"/>
    <property type="match status" value="4"/>
</dbReference>
<dbReference type="PROSITE" id="PS50853">
    <property type="entry name" value="FN3"/>
    <property type="match status" value="6"/>
</dbReference>
<dbReference type="PROSITE" id="PS00383">
    <property type="entry name" value="TYR_PHOSPHATASE_1"/>
    <property type="match status" value="1"/>
</dbReference>
<dbReference type="PROSITE" id="PS50056">
    <property type="entry name" value="TYR_PHOSPHATASE_2"/>
    <property type="match status" value="1"/>
</dbReference>
<dbReference type="PROSITE" id="PS50055">
    <property type="entry name" value="TYR_PHOSPHATASE_PTP"/>
    <property type="match status" value="1"/>
</dbReference>
<sequence>MKPAAREARLPPRSPGLRWALPLLLLLLRLGQILCAGGTPSPIPDPSVATVATGENGITQISSTAESFHKQNGTGTPQVETNTSEDGESSGANDSLRTPEQGSNGTDGASQKTPSSTGPSPVFDIKAVSISPTNVILTWKSNDTAASEYKYVVKHKMENEKTITVVHQPWCNITGLRPATSYVFSITPGIGNETWGDPRVIKVITEPIPVSDLRVALTGVRKAALSWSNGNGTASCRVLLESIGSHEELTQDSRLQVNISGLKPGVQYNINPYLLQSNKTKGDPLGTEGGLDASNTERSRAGSPTAPVHDESLVGPVDPSSGQQSRDTEVLLVGLEPGTRYNATVYSQAANGTEGQPQAIEFRTNAIQVFDVTAVNISATSLTLIWKVSDNESSSNYTYKIHVAGETDSSNLNVSEPRAVIPGLRSSTFYNITVCPVLGDIEGTPGFLQVHTPPVPVSDFRVTVVSTTEIGLAWSSHDAESFQMHITQEGAGNSRVEITTNQSIIIGGLFPGTKYCFEIVPKGPNGTEGASRTVCNRTVPSAVFDIHVVYVTTTEMWLDWKSPDGASEYVYHLVIESKHGSNHTSTYDKAITLQGLIPGTLYNITISPEVDHVWGDPNSTAQYTRPSNVSNIDVSTNTTAATLSWQNFDDASPTYSYCLLIEKAGNSSNATQVVTDIGITDATVTELIPGSSYTVEIFAQVGDGIKSLEPGRKSFCTDPASMASFDCEVVPKEPALVLKWTCPPGANAGFELEVSSGAWNNATHLESCSSENGTEYRTEVTYLNFSTSYNISITTVSCGKMAAPTRNTCTTGITDPPPPDGSPNITSVSHNSVKVKFSGFEASHGPIKAYAVILTTGEAGHPSADVLKYTYEDFKKGASDTYVTYLIRTEEKGRSQSLSEVLKYEIDVGNESTTLGYYNGKLEPLGSYRACVAGFTNITFHPQNKGLIDGAESYVSFSRYSDAVSLPQDPGVICGAVFGCIFGALVIVTVGGFIFWRKKRKDAKNNEVSFSQIKPKKSKLIRVENFEAYFKKQQADSNCGFAEEYEDLKLVGISQPKYAAELAENRGKNRYNNVLPYDISRVKLSVQTHSTDDYINANYMPGYHSKKDFIATQGPLPNTLKDFWRMVWEKNVYAIIMLTKCVEQGRTKCEEYWPSKQAQDYGDITVAMTSEIVLPEWTIRDFTVKNIQTSESHPLRQFHFTSWPDHGVPDTTDLLINFRYLVRDYMKQSPPESPILVHCSAGVGRTGTFIAIDRLIYQIENENTVDVYGIVYDLRMHRPLMVQTEDQYVFLNQCVLDIVRSQKDSKVDLIYQNTTAMTIYENLAPVTTFGKTNGYIA</sequence>
<organism>
    <name type="scientific">Homo sapiens</name>
    <name type="common">Human</name>
    <dbReference type="NCBI Taxonomy" id="9606"/>
    <lineage>
        <taxon>Eukaryota</taxon>
        <taxon>Metazoa</taxon>
        <taxon>Chordata</taxon>
        <taxon>Craniata</taxon>
        <taxon>Vertebrata</taxon>
        <taxon>Euteleostomi</taxon>
        <taxon>Mammalia</taxon>
        <taxon>Eutheria</taxon>
        <taxon>Euarchontoglires</taxon>
        <taxon>Primates</taxon>
        <taxon>Haplorrhini</taxon>
        <taxon>Catarrhini</taxon>
        <taxon>Hominidae</taxon>
        <taxon>Homo</taxon>
    </lineage>
</organism>
<protein>
    <recommendedName>
        <fullName>Receptor-type tyrosine-protein phosphatase eta</fullName>
        <shortName>Protein-tyrosine phosphatase eta</shortName>
        <shortName>R-PTP-eta</shortName>
        <ecNumber>3.1.3.48</ecNumber>
    </recommendedName>
    <alternativeName>
        <fullName evidence="38">Density-enhanced phosphatase 1</fullName>
        <shortName evidence="37">DEP-1</shortName>
    </alternativeName>
    <alternativeName>
        <fullName>HPTP eta</fullName>
    </alternativeName>
    <alternativeName>
        <fullName>Protein-tyrosine phosphatase receptor type J</fullName>
        <shortName>R-PTP-J</shortName>
    </alternativeName>
    <cdAntigenName evidence="41">CD148</cdAntigenName>
</protein>